<name>BEST1_MOUSE</name>
<reference key="1">
    <citation type="journal article" date="2004" name="Cytogenet. Genome Res.">
        <title>Cloning and characterization of the murine Vmd2 RFP-TM gene family.</title>
        <authorList>
            <person name="Kraemer F."/>
            <person name="Stoehr H."/>
            <person name="Weber B.H.F."/>
        </authorList>
    </citation>
    <scope>NUCLEOTIDE SEQUENCE [MRNA]</scope>
    <source>
        <strain>C57BL/6J</strain>
        <tissue>Testis</tissue>
    </source>
</reference>
<reference key="2">
    <citation type="journal article" date="2004" name="Genome Res.">
        <title>The status, quality, and expansion of the NIH full-length cDNA project: the Mammalian Gene Collection (MGC).</title>
        <authorList>
            <consortium name="The MGC Project Team"/>
        </authorList>
    </citation>
    <scope>NUCLEOTIDE SEQUENCE [LARGE SCALE MRNA]</scope>
    <source>
        <tissue>Testis</tissue>
    </source>
</reference>
<reference key="3">
    <citation type="journal article" date="1998" name="Nat. Genet.">
        <title>Identification of the gene responsible for Best macular dystrophy.</title>
        <authorList>
            <person name="Petrukhin K."/>
            <person name="Koisti M.J."/>
            <person name="Bakall B."/>
            <person name="Li W."/>
            <person name="Xie G."/>
            <person name="Marknell T."/>
            <person name="Sandgren O."/>
            <person name="Forsman K."/>
            <person name="Holmgren G."/>
            <person name="Andreasson S."/>
            <person name="Vujic M."/>
            <person name="Bergen A.A.B."/>
            <person name="McGarty-Dugan V."/>
            <person name="Figueroa D."/>
            <person name="Austin C.P."/>
            <person name="Metzker M.L."/>
            <person name="Caskey C.T."/>
            <person name="Wadelius C."/>
        </authorList>
    </citation>
    <scope>NUCLEOTIDE SEQUENCE [MRNA] OF 178-258</scope>
</reference>
<reference key="4">
    <citation type="journal article" date="2010" name="Science">
        <title>Channel-mediated tonic GABA release from glia.</title>
        <authorList>
            <person name="Lee S."/>
            <person name="Yoon B.E."/>
            <person name="Berglund K."/>
            <person name="Oh S.J."/>
            <person name="Park H."/>
            <person name="Shin H.S."/>
            <person name="Augustine G.J."/>
            <person name="Lee C.J."/>
        </authorList>
    </citation>
    <scope>FUNCTION</scope>
    <scope>TRANSPORTER ACTIVITY</scope>
    <scope>MUTAGENESIS OF TRP-93</scope>
</reference>
<reference key="5">
    <citation type="journal article" date="2012" name="Cell">
        <title>TREK-1 and Best1 channels mediate fast and slow glutamate release in astrocytes upon GPCR activation.</title>
        <authorList>
            <person name="Woo D.H."/>
            <person name="Han K.S."/>
            <person name="Shim J.W."/>
            <person name="Yoon B.E."/>
            <person name="Kim E."/>
            <person name="Bae J.Y."/>
            <person name="Oh S.J."/>
            <person name="Hwang E.M."/>
            <person name="Marmorstein A.D."/>
            <person name="Bae Y.C."/>
            <person name="Park J.Y."/>
            <person name="Lee C.J."/>
        </authorList>
    </citation>
    <scope>FUNCTION</scope>
    <scope>TRANSPORTER ACTIVITY</scope>
    <scope>SUBCELLULAR LOCATION</scope>
</reference>
<reference key="6">
    <citation type="journal article" date="2015" name="Mol. Brain">
        <title>Channel-mediated astrocytic glutamate modulates hippocampal synaptic plasticity by activating postsynaptic NMDA receptors.</title>
        <authorList>
            <person name="Park H."/>
            <person name="Han K.S."/>
            <person name="Seo J."/>
            <person name="Lee J."/>
            <person name="Dravid S.M."/>
            <person name="Woo J."/>
            <person name="Chun H."/>
            <person name="Cho S."/>
            <person name="Bae J.Y."/>
            <person name="An H."/>
            <person name="Koh W."/>
            <person name="Yoon B.E."/>
            <person name="Berlinguer-Palmini R."/>
            <person name="Mannaioni G."/>
            <person name="Traynelis S.F."/>
            <person name="Bae Y.C."/>
            <person name="Choi S.Y."/>
            <person name="Lee C.J."/>
        </authorList>
    </citation>
    <scope>FUNCTION</scope>
</reference>
<reference key="7">
    <citation type="journal article" date="2017" name="Mol. Brain">
        <title>Direct interaction with 14-3-3gamma promotes surface expression of Best1 channel in astrocyte.</title>
        <authorList>
            <person name="Oh S.J."/>
            <person name="Woo J."/>
            <person name="Lee Y.S."/>
            <person name="Cho M."/>
            <person name="Kim E."/>
            <person name="Cho N.C."/>
            <person name="Park J.Y."/>
            <person name="Pae A.N."/>
            <person name="Justin Lee C."/>
            <person name="Hwang E.M."/>
        </authorList>
    </citation>
    <scope>FUNCTION</scope>
    <scope>TRANSPORTER ACTIVITY</scope>
    <scope>INTERACTION WITH YWHAG</scope>
    <scope>SUBCELLULAR LOCATION</scope>
    <scope>MUTAGENESIS OF SER-358</scope>
</reference>
<reference key="8">
    <citation type="journal article" date="2022" name="Biol. Psychiatry">
        <title>Astrocytes Render Memory Flexible by Releasing D-Serine and Regulating NMDA Receptor Tone in the Hippocampus.</title>
        <authorList>
            <person name="Koh W."/>
            <person name="Park M."/>
            <person name="Chun Y.E."/>
            <person name="Lee J."/>
            <person name="Shim H.S."/>
            <person name="Park M.G."/>
            <person name="Kim S."/>
            <person name="Sa M."/>
            <person name="Joo J."/>
            <person name="Kang H."/>
            <person name="Oh S.J."/>
            <person name="Woo J."/>
            <person name="Chun H."/>
            <person name="Lee S.E."/>
            <person name="Hong J."/>
            <person name="Feng J."/>
            <person name="Li Y."/>
            <person name="Ryu H."/>
            <person name="Cho J."/>
            <person name="Lee C.J."/>
        </authorList>
    </citation>
    <scope>FUNCTION</scope>
    <scope>TRANSPORTER ACTIVITY</scope>
</reference>
<evidence type="ECO:0000250" key="1">
    <source>
        <dbReference type="UniProtKB" id="O76090"/>
    </source>
</evidence>
<evidence type="ECO:0000256" key="2">
    <source>
        <dbReference type="SAM" id="MobiDB-lite"/>
    </source>
</evidence>
<evidence type="ECO:0000269" key="3">
    <source>
    </source>
</evidence>
<evidence type="ECO:0000269" key="4">
    <source>
    </source>
</evidence>
<evidence type="ECO:0000269" key="5">
    <source>
    </source>
</evidence>
<evidence type="ECO:0000269" key="6">
    <source>
    </source>
</evidence>
<evidence type="ECO:0000269" key="7">
    <source>
    </source>
</evidence>
<evidence type="ECO:0000303" key="8">
    <source>
    </source>
</evidence>
<evidence type="ECO:0000305" key="9"/>
<evidence type="ECO:0000312" key="10">
    <source>
        <dbReference type="MGI" id="MGI:1346332"/>
    </source>
</evidence>
<organism>
    <name type="scientific">Mus musculus</name>
    <name type="common">Mouse</name>
    <dbReference type="NCBI Taxonomy" id="10090"/>
    <lineage>
        <taxon>Eukaryota</taxon>
        <taxon>Metazoa</taxon>
        <taxon>Chordata</taxon>
        <taxon>Craniata</taxon>
        <taxon>Vertebrata</taxon>
        <taxon>Euteleostomi</taxon>
        <taxon>Mammalia</taxon>
        <taxon>Eutheria</taxon>
        <taxon>Euarchontoglires</taxon>
        <taxon>Glires</taxon>
        <taxon>Rodentia</taxon>
        <taxon>Myomorpha</taxon>
        <taxon>Muroidea</taxon>
        <taxon>Muridae</taxon>
        <taxon>Murinae</taxon>
        <taxon>Mus</taxon>
        <taxon>Mus</taxon>
    </lineage>
</organism>
<gene>
    <name evidence="10" type="primary">Best1</name>
    <name type="synonym">Bmd1</name>
    <name evidence="8" type="synonym">Vmd2</name>
</gene>
<sequence>MTITYTNKVANARLGSFSSLLLCWRGSIYKLLYGEFLVFIFLYYSIRGLYRMVLSSDQQLLFEKLALYCDSYIQLIPISFVLGFYVTLVVSRWWSQYENLPWPDRLMIQVSSFVEGKDEEGRLLRRTLIRYAILGQVLILRSISTSVYKRFPTLHHLVLAGFMTHGEHKQLQKLGLPHNTFWVPWVWFANLSMKAYLGGRIRDTVLLQSLMNEVCTLRTQCGQLYAYDWISIPLVYTQVVTVAVYSFFLACLIGRQFLNPNKDYPGHEMDLVVPVFTILQFLFYMGWLKVAEQLINPFGEDDDDFETNWIIDRNLQVSLLSVDGMHQNLPPMERDMYWNEAAPQPPYTAASARSRRHSFMGSTFNISLKKEDLELWSKEEADTDKKESGYSSTIGCFLGLQPKNYHLPLKDLKTKLLCSKNPLLEGQCKDANQKNQKDVWKFKGLDFLKCVPRFKRRGSHCGPQAPSSHPTEQSAPSSSDTGDGPSTDYQEICHMKKKTVEFNLNIPESPTEHLQQRRLDQMSTNIQALMKEHAESYPYRDEAGTKPVLYE</sequence>
<keyword id="KW-0106">Calcium</keyword>
<keyword id="KW-1003">Cell membrane</keyword>
<keyword id="KW-0868">Chloride</keyword>
<keyword id="KW-0869">Chloride channel</keyword>
<keyword id="KW-0407">Ion channel</keyword>
<keyword id="KW-0406">Ion transport</keyword>
<keyword id="KW-0472">Membrane</keyword>
<keyword id="KW-0479">Metal-binding</keyword>
<keyword id="KW-0597">Phosphoprotein</keyword>
<keyword id="KW-1185">Reference proteome</keyword>
<keyword id="KW-0812">Transmembrane</keyword>
<keyword id="KW-1133">Transmembrane helix</keyword>
<keyword id="KW-0813">Transport</keyword>
<proteinExistence type="evidence at protein level"/>
<accession>O88870</accession>
<accession>B2RSY6</accession>
<accession>Q6H1V0</accession>
<dbReference type="EMBL" id="AY450427">
    <property type="protein sequence ID" value="AAS09922.1"/>
    <property type="molecule type" value="mRNA"/>
</dbReference>
<dbReference type="EMBL" id="BC139060">
    <property type="protein sequence ID" value="AAI39061.1"/>
    <property type="molecule type" value="mRNA"/>
</dbReference>
<dbReference type="EMBL" id="BC139061">
    <property type="protein sequence ID" value="AAI39062.1"/>
    <property type="molecule type" value="mRNA"/>
</dbReference>
<dbReference type="EMBL" id="AF057171">
    <property type="protein sequence ID" value="AAC64345.1"/>
    <property type="molecule type" value="mRNA"/>
</dbReference>
<dbReference type="CCDS" id="CCDS29568.1"/>
<dbReference type="RefSeq" id="NP_036043.2">
    <property type="nucleotide sequence ID" value="NM_011913.2"/>
</dbReference>
<dbReference type="SMR" id="O88870"/>
<dbReference type="FunCoup" id="O88870">
    <property type="interactions" value="39"/>
</dbReference>
<dbReference type="STRING" id="10090.ENSMUSP00000113053"/>
<dbReference type="iPTMnet" id="O88870"/>
<dbReference type="PhosphoSitePlus" id="O88870"/>
<dbReference type="PaxDb" id="10090-ENSMUSP00000113053"/>
<dbReference type="ProteomicsDB" id="273555"/>
<dbReference type="Antibodypedia" id="28370">
    <property type="antibodies" value="313 antibodies from 29 providers"/>
</dbReference>
<dbReference type="DNASU" id="24115"/>
<dbReference type="Ensembl" id="ENSMUST00000117346.2">
    <property type="protein sequence ID" value="ENSMUSP00000113053.2"/>
    <property type="gene ID" value="ENSMUSG00000037418.7"/>
</dbReference>
<dbReference type="GeneID" id="24115"/>
<dbReference type="KEGG" id="mmu:24115"/>
<dbReference type="UCSC" id="uc008gou.2">
    <property type="organism name" value="mouse"/>
</dbReference>
<dbReference type="AGR" id="MGI:1346332"/>
<dbReference type="CTD" id="7439"/>
<dbReference type="MGI" id="MGI:1346332">
    <property type="gene designation" value="Best1"/>
</dbReference>
<dbReference type="VEuPathDB" id="HostDB:ENSMUSG00000037418"/>
<dbReference type="eggNOG" id="KOG3547">
    <property type="taxonomic scope" value="Eukaryota"/>
</dbReference>
<dbReference type="GeneTree" id="ENSGT00940000158650"/>
<dbReference type="HOGENOM" id="CLU_018069_5_0_1"/>
<dbReference type="InParanoid" id="O88870"/>
<dbReference type="OMA" id="SVDNMHQ"/>
<dbReference type="OrthoDB" id="201595at2759"/>
<dbReference type="PhylomeDB" id="O88870"/>
<dbReference type="TreeFam" id="TF315803"/>
<dbReference type="Reactome" id="R-MMU-2672351">
    <property type="pathway name" value="Stimuli-sensing channels"/>
</dbReference>
<dbReference type="BioGRID-ORCS" id="24115">
    <property type="hits" value="1 hit in 77 CRISPR screens"/>
</dbReference>
<dbReference type="PRO" id="PR:O88870"/>
<dbReference type="Proteomes" id="UP000000589">
    <property type="component" value="Chromosome 19"/>
</dbReference>
<dbReference type="RNAct" id="O88870">
    <property type="molecule type" value="protein"/>
</dbReference>
<dbReference type="Bgee" id="ENSMUSG00000037418">
    <property type="expression patterns" value="Expressed in seminiferous tubule of testis and 89 other cell types or tissues"/>
</dbReference>
<dbReference type="ExpressionAtlas" id="O88870">
    <property type="expression patterns" value="baseline and differential"/>
</dbReference>
<dbReference type="GO" id="GO:0016323">
    <property type="term" value="C:basolateral plasma membrane"/>
    <property type="evidence" value="ECO:0000250"/>
    <property type="project" value="UniProtKB"/>
</dbReference>
<dbReference type="GO" id="GO:0034707">
    <property type="term" value="C:chloride channel complex"/>
    <property type="evidence" value="ECO:0007669"/>
    <property type="project" value="UniProtKB-KW"/>
</dbReference>
<dbReference type="GO" id="GO:0098857">
    <property type="term" value="C:membrane microdomain"/>
    <property type="evidence" value="ECO:0000314"/>
    <property type="project" value="UniProtKB"/>
</dbReference>
<dbReference type="GO" id="GO:0005886">
    <property type="term" value="C:plasma membrane"/>
    <property type="evidence" value="ECO:0000250"/>
    <property type="project" value="UniProtKB"/>
</dbReference>
<dbReference type="GO" id="GO:0098793">
    <property type="term" value="C:presynapse"/>
    <property type="evidence" value="ECO:0007669"/>
    <property type="project" value="GOC"/>
</dbReference>
<dbReference type="GO" id="GO:0160133">
    <property type="term" value="F:bicarbonate channel activity"/>
    <property type="evidence" value="ECO:0000250"/>
    <property type="project" value="UniProtKB"/>
</dbReference>
<dbReference type="GO" id="GO:0005254">
    <property type="term" value="F:chloride channel activity"/>
    <property type="evidence" value="ECO:0000266"/>
    <property type="project" value="MGI"/>
</dbReference>
<dbReference type="GO" id="GO:0042802">
    <property type="term" value="F:identical protein binding"/>
    <property type="evidence" value="ECO:0007669"/>
    <property type="project" value="Ensembl"/>
</dbReference>
<dbReference type="GO" id="GO:0005229">
    <property type="term" value="F:intracellularly calcium-gated chloride channel activity"/>
    <property type="evidence" value="ECO:0000250"/>
    <property type="project" value="UniProtKB"/>
</dbReference>
<dbReference type="GO" id="GO:0022834">
    <property type="term" value="F:ligand-gated channel activity"/>
    <property type="evidence" value="ECO:0000314"/>
    <property type="project" value="UniProtKB"/>
</dbReference>
<dbReference type="GO" id="GO:0046872">
    <property type="term" value="F:metal ion binding"/>
    <property type="evidence" value="ECO:0007669"/>
    <property type="project" value="UniProtKB-KW"/>
</dbReference>
<dbReference type="GO" id="GO:0006821">
    <property type="term" value="P:chloride transport"/>
    <property type="evidence" value="ECO:0000266"/>
    <property type="project" value="MGI"/>
</dbReference>
<dbReference type="GO" id="GO:0050908">
    <property type="term" value="P:detection of light stimulus involved in visual perception"/>
    <property type="evidence" value="ECO:0000315"/>
    <property type="project" value="MGI"/>
</dbReference>
<dbReference type="GO" id="GO:0061534">
    <property type="term" value="P:gamma-aminobutyric acid secretion, neurotransmission"/>
    <property type="evidence" value="ECO:0000315"/>
    <property type="project" value="UniProtKB"/>
</dbReference>
<dbReference type="GO" id="GO:0014047">
    <property type="term" value="P:glutamate secretion"/>
    <property type="evidence" value="ECO:0000314"/>
    <property type="project" value="UniProtKB"/>
</dbReference>
<dbReference type="GO" id="GO:0051259">
    <property type="term" value="P:protein complex oligomerization"/>
    <property type="evidence" value="ECO:0000250"/>
    <property type="project" value="UniProtKB"/>
</dbReference>
<dbReference type="GO" id="GO:0051924">
    <property type="term" value="P:regulation of calcium ion transport"/>
    <property type="evidence" value="ECO:0000315"/>
    <property type="project" value="MGI"/>
</dbReference>
<dbReference type="GO" id="GO:0048167">
    <property type="term" value="P:regulation of synaptic plasticity"/>
    <property type="evidence" value="ECO:0000314"/>
    <property type="project" value="UniProtKB"/>
</dbReference>
<dbReference type="GO" id="GO:0030321">
    <property type="term" value="P:transepithelial chloride transport"/>
    <property type="evidence" value="ECO:0007669"/>
    <property type="project" value="Ensembl"/>
</dbReference>
<dbReference type="InterPro" id="IPR000615">
    <property type="entry name" value="Bestrophin"/>
</dbReference>
<dbReference type="InterPro" id="IPR021134">
    <property type="entry name" value="Bestrophin-like"/>
</dbReference>
<dbReference type="PANTHER" id="PTHR10736">
    <property type="entry name" value="BESTROPHIN"/>
    <property type="match status" value="1"/>
</dbReference>
<dbReference type="PANTHER" id="PTHR10736:SF4">
    <property type="entry name" value="BESTROPHIN-1"/>
    <property type="match status" value="1"/>
</dbReference>
<dbReference type="Pfam" id="PF01062">
    <property type="entry name" value="Bestrophin"/>
    <property type="match status" value="1"/>
</dbReference>
<feature type="chain" id="PRO_0000143116" description="Bestrophin-1">
    <location>
        <begin position="1"/>
        <end position="551"/>
    </location>
</feature>
<feature type="topological domain" description="Cytoplasmic" evidence="1">
    <location>
        <begin position="1"/>
        <end position="31"/>
    </location>
</feature>
<feature type="transmembrane region" description="Helical" evidence="1">
    <location>
        <begin position="32"/>
        <end position="51"/>
    </location>
</feature>
<feature type="topological domain" description="Extracellular" evidence="1">
    <location>
        <begin position="52"/>
        <end position="60"/>
    </location>
</feature>
<feature type="transmembrane region" description="Helical" evidence="1">
    <location>
        <begin position="61"/>
        <end position="82"/>
    </location>
</feature>
<feature type="topological domain" description="Cytoplasmic" evidence="1">
    <location>
        <begin position="83"/>
        <end position="237"/>
    </location>
</feature>
<feature type="transmembrane region" description="Helical" evidence="1">
    <location>
        <begin position="238"/>
        <end position="255"/>
    </location>
</feature>
<feature type="topological domain" description="Extracellular" evidence="1">
    <location>
        <begin position="256"/>
        <end position="274"/>
    </location>
</feature>
<feature type="transmembrane region" description="Helical" evidence="1">
    <location>
        <begin position="275"/>
        <end position="288"/>
    </location>
</feature>
<feature type="topological domain" description="Cytoplasmic" evidence="1">
    <location>
        <begin position="289"/>
        <end position="551"/>
    </location>
</feature>
<feature type="region of interest" description="Auto-inhibitory segment" evidence="1">
    <location>
        <begin position="346"/>
        <end position="379"/>
    </location>
</feature>
<feature type="region of interest" description="Disordered" evidence="2">
    <location>
        <begin position="459"/>
        <end position="489"/>
    </location>
</feature>
<feature type="compositionally biased region" description="Polar residues" evidence="2">
    <location>
        <begin position="465"/>
        <end position="475"/>
    </location>
</feature>
<feature type="compositionally biased region" description="Low complexity" evidence="2">
    <location>
        <begin position="476"/>
        <end position="488"/>
    </location>
</feature>
<feature type="binding site" description="in other chain" evidence="1">
    <location>
        <position position="10"/>
    </location>
    <ligand>
        <name>Ca(2+)</name>
        <dbReference type="ChEBI" id="CHEBI:29108"/>
        <note>ligand shared between two neighboring subunits</note>
    </ligand>
</feature>
<feature type="binding site" evidence="1">
    <location>
        <position position="293"/>
    </location>
    <ligand>
        <name>Ca(2+)</name>
        <dbReference type="ChEBI" id="CHEBI:29108"/>
        <note>ligand shared between two neighboring subunits</note>
    </ligand>
</feature>
<feature type="binding site" evidence="1">
    <location>
        <position position="296"/>
    </location>
    <ligand>
        <name>Ca(2+)</name>
        <dbReference type="ChEBI" id="CHEBI:29108"/>
        <note>ligand shared between two neighboring subunits</note>
    </ligand>
</feature>
<feature type="binding site" evidence="1">
    <location>
        <position position="301"/>
    </location>
    <ligand>
        <name>Ca(2+)</name>
        <dbReference type="ChEBI" id="CHEBI:29108"/>
        <note>ligand shared between two neighboring subunits</note>
    </ligand>
</feature>
<feature type="binding site" evidence="1">
    <location>
        <position position="304"/>
    </location>
    <ligand>
        <name>Ca(2+)</name>
        <dbReference type="ChEBI" id="CHEBI:29108"/>
        <note>ligand shared between two neighboring subunits</note>
    </ligand>
</feature>
<feature type="mutagenesis site" description="Impairs calcium-dependent anion chanel activity." evidence="3">
    <original>W</original>
    <variation>C</variation>
    <location>
        <position position="93"/>
    </location>
</feature>
<feature type="mutagenesis site" description="Reduces interaction with YWHAG." evidence="6">
    <original>S</original>
    <variation>A</variation>
    <location>
        <position position="358"/>
    </location>
</feature>
<feature type="sequence conflict" description="In Ref. 1; AAS09922 and 3; AAC64345." evidence="9" ref="1 3">
    <original>R</original>
    <variation>K</variation>
    <location>
        <position position="255"/>
    </location>
</feature>
<comment type="function">
    <text evidence="1 3 4 5 6 7">Ligand-gated anion channel that allows the movement of anions across cell membranes when activated by calcium (Ca2+) (By similarity). Allows the movement of chloride and hydrogencarbonate (By similarity). Found in a partially open conformation leading to significantly smaller chloride movement (By similarity). Upon F2R/PAR-1 activation, the sequestered calcium is released into the cytosol of astrocytes, leading to the (Ca2+)-dependent release of L-glutamate into the synaptic cleft that targets the neuronal postsynaptic GRIN2A/NMDAR receptor resulting in the synaptic plasticity regulation (PubMed:23021213, PubMed:25645137, PubMed:29121962). Upon activation of the norepinephrine-alpha-1 adrenergic receptor signaling pathway, transports as well D-serine than L-glutamate in a (Ca2+)-dependent manner, leading to activation of adjacent NMDAR receptors and therefore regulates the heterosynaptic long-term depression and metaplasticity during initial memory acquisition (PubMed:34952697). Releases the 4-aminobutanoate neurotransmitter in a (Ca2+)-dependent manner, and participates in its tonic release from cerebellar glial cells (PubMed:20929730).</text>
</comment>
<comment type="catalytic activity">
    <reaction evidence="3">
        <text>4-aminobutanoate(in) = 4-aminobutanoate(out)</text>
        <dbReference type="Rhea" id="RHEA:35035"/>
        <dbReference type="ChEBI" id="CHEBI:59888"/>
    </reaction>
</comment>
<comment type="catalytic activity">
    <reaction evidence="4 6">
        <text>L-glutamate(out) = L-glutamate(in)</text>
        <dbReference type="Rhea" id="RHEA:66336"/>
        <dbReference type="ChEBI" id="CHEBI:29985"/>
    </reaction>
</comment>
<comment type="catalytic activity">
    <reaction evidence="1">
        <text>chloride(in) = chloride(out)</text>
        <dbReference type="Rhea" id="RHEA:29823"/>
        <dbReference type="ChEBI" id="CHEBI:17996"/>
    </reaction>
</comment>
<comment type="catalytic activity">
    <reaction evidence="1">
        <text>hydrogencarbonate(in) = hydrogencarbonate(out)</text>
        <dbReference type="Rhea" id="RHEA:28695"/>
        <dbReference type="ChEBI" id="CHEBI:17544"/>
    </reaction>
</comment>
<comment type="catalytic activity">
    <reaction evidence="7">
        <text>D-serine(in) = D-serine(out)</text>
        <dbReference type="Rhea" id="RHEA:29455"/>
        <dbReference type="ChEBI" id="CHEBI:35247"/>
    </reaction>
</comment>
<comment type="activity regulation">
    <text evidence="1">Inactivated by sulfhydryl-reactive agents.</text>
</comment>
<comment type="subunit">
    <text evidence="6">Interacts with YWHAG; this interaction promotes the ligand-gated L-glutamate channel activity leading to the positive regulation of NMDA glutamate receptor activity through the L-glutamate secretion.</text>
</comment>
<comment type="subcellular location">
    <subcellularLocation>
        <location evidence="4 6">Cell membrane</location>
        <topology evidence="1">Multi-pass membrane protein</topology>
    </subcellularLocation>
    <subcellularLocation>
        <location evidence="1">Basolateral cell membrane</location>
        <topology evidence="1">Multi-pass membrane protein</topology>
    </subcellularLocation>
    <text evidence="4">Localized at the surface membrane of microdomains adjacent to glutamatergic synapses.</text>
</comment>
<comment type="domain">
    <text evidence="1">The C-terminal auto-inhibitory segment (AS) modulates the open/closed conformation of the channel. In a closed conformation, the C-terminal auto-inhibitory segment constricts the channel concentrically by wrapping around the channel periphery in an inter-protomer manner. To allow chloride movement, the C-terminal auto-inhibitory segment opens partially, leading to significantly smaller chloride movement.</text>
</comment>
<comment type="similarity">
    <text evidence="9">Belongs to the anion channel-forming bestrophin (TC 1.A.46) family. Calcium-sensitive chloride channel subfamily.</text>
</comment>
<protein>
    <recommendedName>
        <fullName evidence="1">Bestrophin-1</fullName>
    </recommendedName>
    <alternativeName>
        <fullName>Vitelliform macular dystrophy protein 2 homolog</fullName>
    </alternativeName>
</protein>